<dbReference type="EMBL" id="CP000416">
    <property type="protein sequence ID" value="ABJ64770.1"/>
    <property type="molecule type" value="Genomic_DNA"/>
</dbReference>
<dbReference type="RefSeq" id="WP_011668504.1">
    <property type="nucleotide sequence ID" value="NC_008497.1"/>
</dbReference>
<dbReference type="SMR" id="Q03PV2"/>
<dbReference type="STRING" id="387344.LVIS_1695"/>
<dbReference type="GeneID" id="56993556"/>
<dbReference type="KEGG" id="lbr:LVIS_1695"/>
<dbReference type="eggNOG" id="COG0048">
    <property type="taxonomic scope" value="Bacteria"/>
</dbReference>
<dbReference type="HOGENOM" id="CLU_104295_1_2_9"/>
<dbReference type="Proteomes" id="UP000001652">
    <property type="component" value="Chromosome"/>
</dbReference>
<dbReference type="GO" id="GO:0015935">
    <property type="term" value="C:small ribosomal subunit"/>
    <property type="evidence" value="ECO:0007669"/>
    <property type="project" value="InterPro"/>
</dbReference>
<dbReference type="GO" id="GO:0019843">
    <property type="term" value="F:rRNA binding"/>
    <property type="evidence" value="ECO:0007669"/>
    <property type="project" value="UniProtKB-UniRule"/>
</dbReference>
<dbReference type="GO" id="GO:0003735">
    <property type="term" value="F:structural constituent of ribosome"/>
    <property type="evidence" value="ECO:0007669"/>
    <property type="project" value="InterPro"/>
</dbReference>
<dbReference type="GO" id="GO:0000049">
    <property type="term" value="F:tRNA binding"/>
    <property type="evidence" value="ECO:0007669"/>
    <property type="project" value="UniProtKB-UniRule"/>
</dbReference>
<dbReference type="GO" id="GO:0006412">
    <property type="term" value="P:translation"/>
    <property type="evidence" value="ECO:0007669"/>
    <property type="project" value="UniProtKB-UniRule"/>
</dbReference>
<dbReference type="CDD" id="cd03368">
    <property type="entry name" value="Ribosomal_S12"/>
    <property type="match status" value="1"/>
</dbReference>
<dbReference type="FunFam" id="2.40.50.140:FF:000001">
    <property type="entry name" value="30S ribosomal protein S12"/>
    <property type="match status" value="1"/>
</dbReference>
<dbReference type="Gene3D" id="2.40.50.140">
    <property type="entry name" value="Nucleic acid-binding proteins"/>
    <property type="match status" value="1"/>
</dbReference>
<dbReference type="HAMAP" id="MF_00403_B">
    <property type="entry name" value="Ribosomal_uS12_B"/>
    <property type="match status" value="1"/>
</dbReference>
<dbReference type="InterPro" id="IPR012340">
    <property type="entry name" value="NA-bd_OB-fold"/>
</dbReference>
<dbReference type="InterPro" id="IPR006032">
    <property type="entry name" value="Ribosomal_uS12"/>
</dbReference>
<dbReference type="InterPro" id="IPR005679">
    <property type="entry name" value="Ribosomal_uS12_bac"/>
</dbReference>
<dbReference type="NCBIfam" id="TIGR00981">
    <property type="entry name" value="rpsL_bact"/>
    <property type="match status" value="1"/>
</dbReference>
<dbReference type="PANTHER" id="PTHR11652">
    <property type="entry name" value="30S RIBOSOMAL PROTEIN S12 FAMILY MEMBER"/>
    <property type="match status" value="1"/>
</dbReference>
<dbReference type="Pfam" id="PF00164">
    <property type="entry name" value="Ribosom_S12_S23"/>
    <property type="match status" value="1"/>
</dbReference>
<dbReference type="PIRSF" id="PIRSF002133">
    <property type="entry name" value="Ribosomal_S12/S23"/>
    <property type="match status" value="1"/>
</dbReference>
<dbReference type="PRINTS" id="PR01034">
    <property type="entry name" value="RIBOSOMALS12"/>
</dbReference>
<dbReference type="SUPFAM" id="SSF50249">
    <property type="entry name" value="Nucleic acid-binding proteins"/>
    <property type="match status" value="1"/>
</dbReference>
<dbReference type="PROSITE" id="PS00055">
    <property type="entry name" value="RIBOSOMAL_S12"/>
    <property type="match status" value="1"/>
</dbReference>
<accession>Q03PV2</accession>
<organism>
    <name type="scientific">Levilactobacillus brevis (strain ATCC 367 / BCRC 12310 / CIP 105137 / JCM 1170 / LMG 11437 / NCIMB 947 / NCTC 947)</name>
    <name type="common">Lactobacillus brevis</name>
    <dbReference type="NCBI Taxonomy" id="387344"/>
    <lineage>
        <taxon>Bacteria</taxon>
        <taxon>Bacillati</taxon>
        <taxon>Bacillota</taxon>
        <taxon>Bacilli</taxon>
        <taxon>Lactobacillales</taxon>
        <taxon>Lactobacillaceae</taxon>
        <taxon>Levilactobacillus</taxon>
    </lineage>
</organism>
<gene>
    <name evidence="2" type="primary">rpsL</name>
    <name type="ordered locus">LVIS_1695</name>
</gene>
<keyword id="KW-0488">Methylation</keyword>
<keyword id="KW-1185">Reference proteome</keyword>
<keyword id="KW-0687">Ribonucleoprotein</keyword>
<keyword id="KW-0689">Ribosomal protein</keyword>
<keyword id="KW-0694">RNA-binding</keyword>
<keyword id="KW-0699">rRNA-binding</keyword>
<keyword id="KW-0820">tRNA-binding</keyword>
<sequence>MPTINQLVRKGRKSKSSKSDAPALNYGYNSFKKAQVKNPAPQKRGVATRVGTMTPKKPNSALRKYARVRLSNLIEVTAYIPGIGHNLQEHSVVLIRGGRVKDLPGVRYHIIRGALDTAGVTDRRQGRSKYGTKKPKG</sequence>
<evidence type="ECO:0000250" key="1"/>
<evidence type="ECO:0000255" key="2">
    <source>
        <dbReference type="HAMAP-Rule" id="MF_00403"/>
    </source>
</evidence>
<evidence type="ECO:0000256" key="3">
    <source>
        <dbReference type="SAM" id="MobiDB-lite"/>
    </source>
</evidence>
<evidence type="ECO:0000305" key="4"/>
<comment type="function">
    <text evidence="2">With S4 and S5 plays an important role in translational accuracy.</text>
</comment>
<comment type="function">
    <text evidence="2">Interacts with and stabilizes bases of the 16S rRNA that are involved in tRNA selection in the A site and with the mRNA backbone. Located at the interface of the 30S and 50S subunits, it traverses the body of the 30S subunit contacting proteins on the other side and probably holding the rRNA structure together. The combined cluster of proteins S8, S12 and S17 appears to hold together the shoulder and platform of the 30S subunit.</text>
</comment>
<comment type="subunit">
    <text evidence="2">Part of the 30S ribosomal subunit. Contacts proteins S8 and S17. May interact with IF1 in the 30S initiation complex.</text>
</comment>
<comment type="similarity">
    <text evidence="2">Belongs to the universal ribosomal protein uS12 family.</text>
</comment>
<name>RS12_LEVBA</name>
<reference key="1">
    <citation type="journal article" date="2006" name="Proc. Natl. Acad. Sci. U.S.A.">
        <title>Comparative genomics of the lactic acid bacteria.</title>
        <authorList>
            <person name="Makarova K.S."/>
            <person name="Slesarev A."/>
            <person name="Wolf Y.I."/>
            <person name="Sorokin A."/>
            <person name="Mirkin B."/>
            <person name="Koonin E.V."/>
            <person name="Pavlov A."/>
            <person name="Pavlova N."/>
            <person name="Karamychev V."/>
            <person name="Polouchine N."/>
            <person name="Shakhova V."/>
            <person name="Grigoriev I."/>
            <person name="Lou Y."/>
            <person name="Rohksar D."/>
            <person name="Lucas S."/>
            <person name="Huang K."/>
            <person name="Goodstein D.M."/>
            <person name="Hawkins T."/>
            <person name="Plengvidhya V."/>
            <person name="Welker D."/>
            <person name="Hughes J."/>
            <person name="Goh Y."/>
            <person name="Benson A."/>
            <person name="Baldwin K."/>
            <person name="Lee J.-H."/>
            <person name="Diaz-Muniz I."/>
            <person name="Dosti B."/>
            <person name="Smeianov V."/>
            <person name="Wechter W."/>
            <person name="Barabote R."/>
            <person name="Lorca G."/>
            <person name="Altermann E."/>
            <person name="Barrangou R."/>
            <person name="Ganesan B."/>
            <person name="Xie Y."/>
            <person name="Rawsthorne H."/>
            <person name="Tamir D."/>
            <person name="Parker C."/>
            <person name="Breidt F."/>
            <person name="Broadbent J.R."/>
            <person name="Hutkins R."/>
            <person name="O'Sullivan D."/>
            <person name="Steele J."/>
            <person name="Unlu G."/>
            <person name="Saier M.H. Jr."/>
            <person name="Klaenhammer T."/>
            <person name="Richardson P."/>
            <person name="Kozyavkin S."/>
            <person name="Weimer B.C."/>
            <person name="Mills D.A."/>
        </authorList>
    </citation>
    <scope>NUCLEOTIDE SEQUENCE [LARGE SCALE GENOMIC DNA]</scope>
    <source>
        <strain>ATCC 367 / BCRC 12310 / CIP 105137 / JCM 1170 / LMG 11437 / NCIMB 947 / NCTC 947</strain>
    </source>
</reference>
<feature type="chain" id="PRO_0000295986" description="Small ribosomal subunit protein uS12">
    <location>
        <begin position="1"/>
        <end position="137"/>
    </location>
</feature>
<feature type="region of interest" description="Disordered" evidence="3">
    <location>
        <begin position="1"/>
        <end position="23"/>
    </location>
</feature>
<feature type="modified residue" description="3-methylthioaspartic acid" evidence="1">
    <location>
        <position position="102"/>
    </location>
</feature>
<protein>
    <recommendedName>
        <fullName evidence="2">Small ribosomal subunit protein uS12</fullName>
    </recommendedName>
    <alternativeName>
        <fullName evidence="4">30S ribosomal protein S12</fullName>
    </alternativeName>
</protein>
<proteinExistence type="inferred from homology"/>